<proteinExistence type="inferred from homology"/>
<keyword id="KW-0963">Cytoplasm</keyword>
<keyword id="KW-0227">DNA damage</keyword>
<keyword id="KW-0228">DNA excision</keyword>
<keyword id="KW-0234">DNA repair</keyword>
<keyword id="KW-0267">Excision nuclease</keyword>
<keyword id="KW-0742">SOS response</keyword>
<feature type="chain" id="PRO_0000264977" description="UvrABC system protein C">
    <location>
        <begin position="1"/>
        <end position="619"/>
    </location>
</feature>
<feature type="domain" description="GIY-YIG" evidence="1">
    <location>
        <begin position="20"/>
        <end position="98"/>
    </location>
</feature>
<feature type="domain" description="UVR" evidence="1">
    <location>
        <begin position="207"/>
        <end position="242"/>
    </location>
</feature>
<dbReference type="EMBL" id="AE008923">
    <property type="protein sequence ID" value="AAM36949.1"/>
    <property type="molecule type" value="Genomic_DNA"/>
</dbReference>
<dbReference type="RefSeq" id="WP_005923353.1">
    <property type="nucleotide sequence ID" value="NC_003919.1"/>
</dbReference>
<dbReference type="SMR" id="Q8PKS0"/>
<dbReference type="GeneID" id="66911227"/>
<dbReference type="KEGG" id="xac:XAC2092"/>
<dbReference type="eggNOG" id="COG0322">
    <property type="taxonomic scope" value="Bacteria"/>
</dbReference>
<dbReference type="HOGENOM" id="CLU_014841_3_0_6"/>
<dbReference type="Proteomes" id="UP000000576">
    <property type="component" value="Chromosome"/>
</dbReference>
<dbReference type="GO" id="GO:0005737">
    <property type="term" value="C:cytoplasm"/>
    <property type="evidence" value="ECO:0007669"/>
    <property type="project" value="UniProtKB-SubCell"/>
</dbReference>
<dbReference type="GO" id="GO:0009380">
    <property type="term" value="C:excinuclease repair complex"/>
    <property type="evidence" value="ECO:0007669"/>
    <property type="project" value="InterPro"/>
</dbReference>
<dbReference type="GO" id="GO:0003677">
    <property type="term" value="F:DNA binding"/>
    <property type="evidence" value="ECO:0007669"/>
    <property type="project" value="UniProtKB-UniRule"/>
</dbReference>
<dbReference type="GO" id="GO:0009381">
    <property type="term" value="F:excinuclease ABC activity"/>
    <property type="evidence" value="ECO:0007669"/>
    <property type="project" value="UniProtKB-UniRule"/>
</dbReference>
<dbReference type="GO" id="GO:0006289">
    <property type="term" value="P:nucleotide-excision repair"/>
    <property type="evidence" value="ECO:0007669"/>
    <property type="project" value="UniProtKB-UniRule"/>
</dbReference>
<dbReference type="GO" id="GO:0009432">
    <property type="term" value="P:SOS response"/>
    <property type="evidence" value="ECO:0007669"/>
    <property type="project" value="UniProtKB-UniRule"/>
</dbReference>
<dbReference type="CDD" id="cd10434">
    <property type="entry name" value="GIY-YIG_UvrC_Cho"/>
    <property type="match status" value="1"/>
</dbReference>
<dbReference type="FunFam" id="1.10.150.20:FF:000005">
    <property type="entry name" value="UvrABC system protein C"/>
    <property type="match status" value="1"/>
</dbReference>
<dbReference type="FunFam" id="3.30.420.340:FF:000001">
    <property type="entry name" value="UvrABC system protein C"/>
    <property type="match status" value="1"/>
</dbReference>
<dbReference type="FunFam" id="3.40.1440.10:FF:000001">
    <property type="entry name" value="UvrABC system protein C"/>
    <property type="match status" value="1"/>
</dbReference>
<dbReference type="Gene3D" id="1.10.150.20">
    <property type="entry name" value="5' to 3' exonuclease, C-terminal subdomain"/>
    <property type="match status" value="1"/>
</dbReference>
<dbReference type="Gene3D" id="3.40.1440.10">
    <property type="entry name" value="GIY-YIG endonuclease"/>
    <property type="match status" value="1"/>
</dbReference>
<dbReference type="Gene3D" id="4.10.860.10">
    <property type="entry name" value="UVR domain"/>
    <property type="match status" value="1"/>
</dbReference>
<dbReference type="Gene3D" id="3.30.420.340">
    <property type="entry name" value="UvrC, RNAse H endonuclease domain"/>
    <property type="match status" value="1"/>
</dbReference>
<dbReference type="HAMAP" id="MF_00203">
    <property type="entry name" value="UvrC"/>
    <property type="match status" value="1"/>
</dbReference>
<dbReference type="InterPro" id="IPR000305">
    <property type="entry name" value="GIY-YIG_endonuc"/>
</dbReference>
<dbReference type="InterPro" id="IPR035901">
    <property type="entry name" value="GIY-YIG_endonuc_sf"/>
</dbReference>
<dbReference type="InterPro" id="IPR047296">
    <property type="entry name" value="GIY-YIG_UvrC_Cho"/>
</dbReference>
<dbReference type="InterPro" id="IPR003583">
    <property type="entry name" value="Hlx-hairpin-Hlx_DNA-bd_motif"/>
</dbReference>
<dbReference type="InterPro" id="IPR010994">
    <property type="entry name" value="RuvA_2-like"/>
</dbReference>
<dbReference type="InterPro" id="IPR001943">
    <property type="entry name" value="UVR_dom"/>
</dbReference>
<dbReference type="InterPro" id="IPR036876">
    <property type="entry name" value="UVR_dom_sf"/>
</dbReference>
<dbReference type="InterPro" id="IPR050066">
    <property type="entry name" value="UvrABC_protein_C"/>
</dbReference>
<dbReference type="InterPro" id="IPR004791">
    <property type="entry name" value="UvrC"/>
</dbReference>
<dbReference type="InterPro" id="IPR001162">
    <property type="entry name" value="UvrC_RNase_H_dom"/>
</dbReference>
<dbReference type="InterPro" id="IPR038476">
    <property type="entry name" value="UvrC_RNase_H_dom_sf"/>
</dbReference>
<dbReference type="NCBIfam" id="TIGR00194">
    <property type="entry name" value="uvrC"/>
    <property type="match status" value="1"/>
</dbReference>
<dbReference type="PANTHER" id="PTHR30562:SF1">
    <property type="entry name" value="UVRABC SYSTEM PROTEIN C"/>
    <property type="match status" value="1"/>
</dbReference>
<dbReference type="PANTHER" id="PTHR30562">
    <property type="entry name" value="UVRC/OXIDOREDUCTASE"/>
    <property type="match status" value="1"/>
</dbReference>
<dbReference type="Pfam" id="PF01541">
    <property type="entry name" value="GIY-YIG"/>
    <property type="match status" value="1"/>
</dbReference>
<dbReference type="Pfam" id="PF14520">
    <property type="entry name" value="HHH_5"/>
    <property type="match status" value="1"/>
</dbReference>
<dbReference type="Pfam" id="PF02151">
    <property type="entry name" value="UVR"/>
    <property type="match status" value="1"/>
</dbReference>
<dbReference type="Pfam" id="PF22920">
    <property type="entry name" value="UvrC_RNaseH"/>
    <property type="match status" value="1"/>
</dbReference>
<dbReference type="Pfam" id="PF08459">
    <property type="entry name" value="UvrC_RNaseH_dom"/>
    <property type="match status" value="1"/>
</dbReference>
<dbReference type="SMART" id="SM00465">
    <property type="entry name" value="GIYc"/>
    <property type="match status" value="1"/>
</dbReference>
<dbReference type="SMART" id="SM00278">
    <property type="entry name" value="HhH1"/>
    <property type="match status" value="2"/>
</dbReference>
<dbReference type="SUPFAM" id="SSF46600">
    <property type="entry name" value="C-terminal UvrC-binding domain of UvrB"/>
    <property type="match status" value="1"/>
</dbReference>
<dbReference type="SUPFAM" id="SSF82771">
    <property type="entry name" value="GIY-YIG endonuclease"/>
    <property type="match status" value="1"/>
</dbReference>
<dbReference type="SUPFAM" id="SSF47781">
    <property type="entry name" value="RuvA domain 2-like"/>
    <property type="match status" value="1"/>
</dbReference>
<dbReference type="PROSITE" id="PS50164">
    <property type="entry name" value="GIY_YIG"/>
    <property type="match status" value="1"/>
</dbReference>
<dbReference type="PROSITE" id="PS50151">
    <property type="entry name" value="UVR"/>
    <property type="match status" value="1"/>
</dbReference>
<dbReference type="PROSITE" id="PS50165">
    <property type="entry name" value="UVRC"/>
    <property type="match status" value="1"/>
</dbReference>
<accession>Q8PKS0</accession>
<reference key="1">
    <citation type="journal article" date="2002" name="Nature">
        <title>Comparison of the genomes of two Xanthomonas pathogens with differing host specificities.</title>
        <authorList>
            <person name="da Silva A.C.R."/>
            <person name="Ferro J.A."/>
            <person name="Reinach F.C."/>
            <person name="Farah C.S."/>
            <person name="Furlan L.R."/>
            <person name="Quaggio R.B."/>
            <person name="Monteiro-Vitorello C.B."/>
            <person name="Van Sluys M.A."/>
            <person name="Almeida N.F. Jr."/>
            <person name="Alves L.M.C."/>
            <person name="do Amaral A.M."/>
            <person name="Bertolini M.C."/>
            <person name="Camargo L.E.A."/>
            <person name="Camarotte G."/>
            <person name="Cannavan F."/>
            <person name="Cardozo J."/>
            <person name="Chambergo F."/>
            <person name="Ciapina L.P."/>
            <person name="Cicarelli R.M.B."/>
            <person name="Coutinho L.L."/>
            <person name="Cursino-Santos J.R."/>
            <person name="El-Dorry H."/>
            <person name="Faria J.B."/>
            <person name="Ferreira A.J.S."/>
            <person name="Ferreira R.C.C."/>
            <person name="Ferro M.I.T."/>
            <person name="Formighieri E.F."/>
            <person name="Franco M.C."/>
            <person name="Greggio C.C."/>
            <person name="Gruber A."/>
            <person name="Katsuyama A.M."/>
            <person name="Kishi L.T."/>
            <person name="Leite R.P."/>
            <person name="Lemos E.G.M."/>
            <person name="Lemos M.V.F."/>
            <person name="Locali E.C."/>
            <person name="Machado M.A."/>
            <person name="Madeira A.M.B.N."/>
            <person name="Martinez-Rossi N.M."/>
            <person name="Martins E.C."/>
            <person name="Meidanis J."/>
            <person name="Menck C.F.M."/>
            <person name="Miyaki C.Y."/>
            <person name="Moon D.H."/>
            <person name="Moreira L.M."/>
            <person name="Novo M.T.M."/>
            <person name="Okura V.K."/>
            <person name="Oliveira M.C."/>
            <person name="Oliveira V.R."/>
            <person name="Pereira H.A."/>
            <person name="Rossi A."/>
            <person name="Sena J.A.D."/>
            <person name="Silva C."/>
            <person name="de Souza R.F."/>
            <person name="Spinola L.A.F."/>
            <person name="Takita M.A."/>
            <person name="Tamura R.E."/>
            <person name="Teixeira E.C."/>
            <person name="Tezza R.I.D."/>
            <person name="Trindade dos Santos M."/>
            <person name="Truffi D."/>
            <person name="Tsai S.M."/>
            <person name="White F.F."/>
            <person name="Setubal J.C."/>
            <person name="Kitajima J.P."/>
        </authorList>
    </citation>
    <scope>NUCLEOTIDE SEQUENCE [LARGE SCALE GENOMIC DNA]</scope>
    <source>
        <strain>306</strain>
    </source>
</reference>
<evidence type="ECO:0000255" key="1">
    <source>
        <dbReference type="HAMAP-Rule" id="MF_00203"/>
    </source>
</evidence>
<protein>
    <recommendedName>
        <fullName evidence="1">UvrABC system protein C</fullName>
        <shortName evidence="1">Protein UvrC</shortName>
    </recommendedName>
    <alternativeName>
        <fullName evidence="1">Excinuclease ABC subunit C</fullName>
    </alternativeName>
</protein>
<name>UVRC_XANAC</name>
<sequence length="619" mass="67879">MSVRPQNDFDGKAFAAQLSTAPGVYRMYAGDDTLLYVGKAGALRKRVGSYFNGTPKNARLTSMLSQVARMDVTVTRSEAEALLLENQLIKSLSPRYNVSLRDDKSYPYVLLTREQWPRIALHRGPRAVQGRYFGPYTGVTGVRETLSLMHKLFKLRSCEDSVFRNRSRPCLQYQIGRCSGPCVDLVAAPDYAESVRRATMFLEGKSDQLGEEIMHSMQQASEALEFERAARLRDLLSSLRSMQNRQYVDGRAADLDVLACATQSSQACVLLLSFRDGRNLGTRSFFPKTNGEDSADEILGAFVSQYYAEHSPPREILLDREIPEAELIEAALSTAAEHKVALKWNVRGERAGYLLLATRNAQLTLVTELTSQSAQHARSEALRELLGLAEPVKRVECFDISHTMGEATVASCVVFDASGPVRGQYRRFNISGITPGDDYAAMRQAIERRFRRAVEENGVIPDVLLIDGGAGQLAQAQAALADLGVENVLLVGVAKGEERRAGHEALIMADGRELRPGAASPALQFIQQVRDEAHRFAITGHRGRRQKARMTSKLEDIPGIGPRRRASLLKHFGGLVGLKAAGEAEIARVEGVNAALAARIYANLHGLALPDAAGEASPQ</sequence>
<gene>
    <name evidence="1" type="primary">uvrC</name>
    <name type="ordered locus">XAC2092</name>
</gene>
<organism>
    <name type="scientific">Xanthomonas axonopodis pv. citri (strain 306)</name>
    <dbReference type="NCBI Taxonomy" id="190486"/>
    <lineage>
        <taxon>Bacteria</taxon>
        <taxon>Pseudomonadati</taxon>
        <taxon>Pseudomonadota</taxon>
        <taxon>Gammaproteobacteria</taxon>
        <taxon>Lysobacterales</taxon>
        <taxon>Lysobacteraceae</taxon>
        <taxon>Xanthomonas</taxon>
    </lineage>
</organism>
<comment type="function">
    <text evidence="1">The UvrABC repair system catalyzes the recognition and processing of DNA lesions. UvrC both incises the 5' and 3' sides of the lesion. The N-terminal half is responsible for the 3' incision and the C-terminal half is responsible for the 5' incision.</text>
</comment>
<comment type="subunit">
    <text evidence="1">Interacts with UvrB in an incision complex.</text>
</comment>
<comment type="subcellular location">
    <subcellularLocation>
        <location evidence="1">Cytoplasm</location>
    </subcellularLocation>
</comment>
<comment type="similarity">
    <text evidence="1">Belongs to the UvrC family.</text>
</comment>